<gene>
    <name type="primary">alsR</name>
    <name type="ordered locus">BSU36020</name>
</gene>
<dbReference type="EMBL" id="L04470">
    <property type="protein sequence ID" value="AAA22221.1"/>
    <property type="molecule type" value="Genomic_DNA"/>
</dbReference>
<dbReference type="EMBL" id="Z93767">
    <property type="protein sequence ID" value="CAB07788.1"/>
    <property type="molecule type" value="Genomic_DNA"/>
</dbReference>
<dbReference type="EMBL" id="AL009126">
    <property type="protein sequence ID" value="CAB15619.1"/>
    <property type="molecule type" value="Genomic_DNA"/>
</dbReference>
<dbReference type="PIR" id="A47126">
    <property type="entry name" value="A47126"/>
</dbReference>
<dbReference type="RefSeq" id="NP_391483.1">
    <property type="nucleotide sequence ID" value="NC_000964.3"/>
</dbReference>
<dbReference type="RefSeq" id="WP_003227859.1">
    <property type="nucleotide sequence ID" value="NZ_OZ025638.1"/>
</dbReference>
<dbReference type="SMR" id="Q04778"/>
<dbReference type="FunCoup" id="Q04778">
    <property type="interactions" value="131"/>
</dbReference>
<dbReference type="IntAct" id="Q04778">
    <property type="interactions" value="1"/>
</dbReference>
<dbReference type="STRING" id="224308.BSU36020"/>
<dbReference type="PaxDb" id="224308-BSU36020"/>
<dbReference type="EnsemblBacteria" id="CAB15619">
    <property type="protein sequence ID" value="CAB15619"/>
    <property type="gene ID" value="BSU_36020"/>
</dbReference>
<dbReference type="GeneID" id="936860"/>
<dbReference type="KEGG" id="bsu:BSU36020"/>
<dbReference type="PATRIC" id="fig|224308.179.peg.3899"/>
<dbReference type="eggNOG" id="COG0583">
    <property type="taxonomic scope" value="Bacteria"/>
</dbReference>
<dbReference type="InParanoid" id="Q04778"/>
<dbReference type="OrthoDB" id="9803735at2"/>
<dbReference type="PhylomeDB" id="Q04778"/>
<dbReference type="BioCyc" id="BSUB:BSU36020-MONOMER"/>
<dbReference type="Proteomes" id="UP000001570">
    <property type="component" value="Chromosome"/>
</dbReference>
<dbReference type="GO" id="GO:0032993">
    <property type="term" value="C:protein-DNA complex"/>
    <property type="evidence" value="ECO:0000318"/>
    <property type="project" value="GO_Central"/>
</dbReference>
<dbReference type="GO" id="GO:0003677">
    <property type="term" value="F:DNA binding"/>
    <property type="evidence" value="ECO:0007669"/>
    <property type="project" value="UniProtKB-KW"/>
</dbReference>
<dbReference type="GO" id="GO:0003700">
    <property type="term" value="F:DNA-binding transcription factor activity"/>
    <property type="evidence" value="ECO:0000318"/>
    <property type="project" value="GO_Central"/>
</dbReference>
<dbReference type="GO" id="GO:0045151">
    <property type="term" value="P:acetoin biosynthetic process"/>
    <property type="evidence" value="ECO:0007669"/>
    <property type="project" value="UniProtKB-KW"/>
</dbReference>
<dbReference type="GO" id="GO:0006355">
    <property type="term" value="P:regulation of DNA-templated transcription"/>
    <property type="evidence" value="ECO:0000318"/>
    <property type="project" value="GO_Central"/>
</dbReference>
<dbReference type="CDD" id="cd08452">
    <property type="entry name" value="PBP2_AlsR"/>
    <property type="match status" value="1"/>
</dbReference>
<dbReference type="FunFam" id="1.10.10.10:FF:000001">
    <property type="entry name" value="LysR family transcriptional regulator"/>
    <property type="match status" value="1"/>
</dbReference>
<dbReference type="Gene3D" id="3.40.190.10">
    <property type="entry name" value="Periplasmic binding protein-like II"/>
    <property type="match status" value="2"/>
</dbReference>
<dbReference type="Gene3D" id="1.10.10.10">
    <property type="entry name" value="Winged helix-like DNA-binding domain superfamily/Winged helix DNA-binding domain"/>
    <property type="match status" value="1"/>
</dbReference>
<dbReference type="InterPro" id="IPR054793">
    <property type="entry name" value="AlsR"/>
</dbReference>
<dbReference type="InterPro" id="IPR037411">
    <property type="entry name" value="AlsR_PBP2"/>
</dbReference>
<dbReference type="InterPro" id="IPR005119">
    <property type="entry name" value="LysR_subst-bd"/>
</dbReference>
<dbReference type="InterPro" id="IPR000847">
    <property type="entry name" value="Tscrpt_reg_HTH_LysR"/>
</dbReference>
<dbReference type="InterPro" id="IPR036388">
    <property type="entry name" value="WH-like_DNA-bd_sf"/>
</dbReference>
<dbReference type="InterPro" id="IPR036390">
    <property type="entry name" value="WH_DNA-bd_sf"/>
</dbReference>
<dbReference type="NCBIfam" id="NF045775">
    <property type="entry name" value="acetoin_reg_AlsR"/>
    <property type="match status" value="1"/>
</dbReference>
<dbReference type="PANTHER" id="PTHR30346:SF0">
    <property type="entry name" value="HCA OPERON TRANSCRIPTIONAL ACTIVATOR HCAR"/>
    <property type="match status" value="1"/>
</dbReference>
<dbReference type="PANTHER" id="PTHR30346">
    <property type="entry name" value="TRANSCRIPTIONAL DUAL REGULATOR HCAR-RELATED"/>
    <property type="match status" value="1"/>
</dbReference>
<dbReference type="Pfam" id="PF00126">
    <property type="entry name" value="HTH_1"/>
    <property type="match status" value="1"/>
</dbReference>
<dbReference type="Pfam" id="PF03466">
    <property type="entry name" value="LysR_substrate"/>
    <property type="match status" value="1"/>
</dbReference>
<dbReference type="PRINTS" id="PR00039">
    <property type="entry name" value="HTHLYSR"/>
</dbReference>
<dbReference type="SUPFAM" id="SSF53850">
    <property type="entry name" value="Periplasmic binding protein-like II"/>
    <property type="match status" value="1"/>
</dbReference>
<dbReference type="SUPFAM" id="SSF46785">
    <property type="entry name" value="Winged helix' DNA-binding domain"/>
    <property type="match status" value="1"/>
</dbReference>
<dbReference type="PROSITE" id="PS50931">
    <property type="entry name" value="HTH_LYSR"/>
    <property type="match status" value="1"/>
</dbReference>
<comment type="function">
    <text>Regulates the expression of the alsSD operon for acetoin biosynthesis.</text>
</comment>
<comment type="similarity">
    <text evidence="2">Belongs to the LysR transcriptional regulatory family.</text>
</comment>
<keyword id="KW-0005">Acetoin biosynthesis</keyword>
<keyword id="KW-0238">DNA-binding</keyword>
<keyword id="KW-1185">Reference proteome</keyword>
<keyword id="KW-0804">Transcription</keyword>
<keyword id="KW-0805">Transcription regulation</keyword>
<protein>
    <recommendedName>
        <fullName>HTH-type transcriptional regulator AlsR</fullName>
    </recommendedName>
    <alternativeName>
        <fullName>Als operon regulatory protein</fullName>
    </alternativeName>
</protein>
<sequence length="302" mass="34333">MELRHLQYFIAVAEELHFGKAARRLNMTQPPLSQQIKQLEEEVGVTLLKRTKRFVELTAAGEIFLNHCRMALMQIGQGIELAQRTARGEQGLLVIGFVGSATYEFLPPIVREYRKKFPSVKIELREISSSRQQEELLKGNIDIGILHPPLQHTALHIETAQSSPCVLALPKQHPLTSKESITIEDLRDEPIITVAKEAWPTLYMDFIQFCEQAGFRPNIVQEATEYQMVIGLVSAGIGMTFVPSSAKKLFNLDVTYRKMDQIQLNAEWVIAYRKDNHNPLIKHFIHISNCQQTRTKESDAGT</sequence>
<evidence type="ECO:0000255" key="1">
    <source>
        <dbReference type="PROSITE-ProRule" id="PRU00253"/>
    </source>
</evidence>
<evidence type="ECO:0000305" key="2"/>
<name>ALSR_BACSU</name>
<accession>Q04778</accession>
<proteinExistence type="inferred from homology"/>
<feature type="chain" id="PRO_0000105584" description="HTH-type transcriptional regulator AlsR">
    <location>
        <begin position="1"/>
        <end position="302"/>
    </location>
</feature>
<feature type="domain" description="HTH lysR-type" evidence="1">
    <location>
        <begin position="1"/>
        <end position="58"/>
    </location>
</feature>
<feature type="DNA-binding region" description="H-T-H motif" evidence="1">
    <location>
        <begin position="18"/>
        <end position="37"/>
    </location>
</feature>
<organism>
    <name type="scientific">Bacillus subtilis (strain 168)</name>
    <dbReference type="NCBI Taxonomy" id="224308"/>
    <lineage>
        <taxon>Bacteria</taxon>
        <taxon>Bacillati</taxon>
        <taxon>Bacillota</taxon>
        <taxon>Bacilli</taxon>
        <taxon>Bacillales</taxon>
        <taxon>Bacillaceae</taxon>
        <taxon>Bacillus</taxon>
    </lineage>
</organism>
<reference key="1">
    <citation type="journal article" date="1993" name="J. Bacteriol.">
        <title>Regulation of the Bacillus subtilis alsS, alsD, and alsR genes involved in post-exponential-phase production of acetoin.</title>
        <authorList>
            <person name="Renna M.C."/>
            <person name="Najimudin N."/>
            <person name="Winik L.R."/>
            <person name="Zahler S.A."/>
        </authorList>
    </citation>
    <scope>NUCLEOTIDE SEQUENCE [GENOMIC DNA]</scope>
</reference>
<reference key="2">
    <citation type="journal article" date="1997" name="Microbiology">
        <title>The Bacillus subtilis genome from gerBC (311 degrees) to licR (334 degrees).</title>
        <authorList>
            <person name="Presecan E."/>
            <person name="Moszer I."/>
            <person name="Boursier L."/>
            <person name="Cruz Ramos H."/>
            <person name="De La Fuente V."/>
            <person name="Hullo M.-F."/>
            <person name="Lelong C."/>
            <person name="Schleich S."/>
            <person name="Sekowska A."/>
            <person name="Song B.H."/>
            <person name="Villani G."/>
            <person name="Kunst F."/>
            <person name="Danchin A."/>
            <person name="Glaser P."/>
        </authorList>
    </citation>
    <scope>NUCLEOTIDE SEQUENCE [GENOMIC DNA]</scope>
    <source>
        <strain>168</strain>
    </source>
</reference>
<reference key="3">
    <citation type="journal article" date="1997" name="Nature">
        <title>The complete genome sequence of the Gram-positive bacterium Bacillus subtilis.</title>
        <authorList>
            <person name="Kunst F."/>
            <person name="Ogasawara N."/>
            <person name="Moszer I."/>
            <person name="Albertini A.M."/>
            <person name="Alloni G."/>
            <person name="Azevedo V."/>
            <person name="Bertero M.G."/>
            <person name="Bessieres P."/>
            <person name="Bolotin A."/>
            <person name="Borchert S."/>
            <person name="Borriss R."/>
            <person name="Boursier L."/>
            <person name="Brans A."/>
            <person name="Braun M."/>
            <person name="Brignell S.C."/>
            <person name="Bron S."/>
            <person name="Brouillet S."/>
            <person name="Bruschi C.V."/>
            <person name="Caldwell B."/>
            <person name="Capuano V."/>
            <person name="Carter N.M."/>
            <person name="Choi S.-K."/>
            <person name="Codani J.-J."/>
            <person name="Connerton I.F."/>
            <person name="Cummings N.J."/>
            <person name="Daniel R.A."/>
            <person name="Denizot F."/>
            <person name="Devine K.M."/>
            <person name="Duesterhoeft A."/>
            <person name="Ehrlich S.D."/>
            <person name="Emmerson P.T."/>
            <person name="Entian K.-D."/>
            <person name="Errington J."/>
            <person name="Fabret C."/>
            <person name="Ferrari E."/>
            <person name="Foulger D."/>
            <person name="Fritz C."/>
            <person name="Fujita M."/>
            <person name="Fujita Y."/>
            <person name="Fuma S."/>
            <person name="Galizzi A."/>
            <person name="Galleron N."/>
            <person name="Ghim S.-Y."/>
            <person name="Glaser P."/>
            <person name="Goffeau A."/>
            <person name="Golightly E.J."/>
            <person name="Grandi G."/>
            <person name="Guiseppi G."/>
            <person name="Guy B.J."/>
            <person name="Haga K."/>
            <person name="Haiech J."/>
            <person name="Harwood C.R."/>
            <person name="Henaut A."/>
            <person name="Hilbert H."/>
            <person name="Holsappel S."/>
            <person name="Hosono S."/>
            <person name="Hullo M.-F."/>
            <person name="Itaya M."/>
            <person name="Jones L.-M."/>
            <person name="Joris B."/>
            <person name="Karamata D."/>
            <person name="Kasahara Y."/>
            <person name="Klaerr-Blanchard M."/>
            <person name="Klein C."/>
            <person name="Kobayashi Y."/>
            <person name="Koetter P."/>
            <person name="Koningstein G."/>
            <person name="Krogh S."/>
            <person name="Kumano M."/>
            <person name="Kurita K."/>
            <person name="Lapidus A."/>
            <person name="Lardinois S."/>
            <person name="Lauber J."/>
            <person name="Lazarevic V."/>
            <person name="Lee S.-M."/>
            <person name="Levine A."/>
            <person name="Liu H."/>
            <person name="Masuda S."/>
            <person name="Mauel C."/>
            <person name="Medigue C."/>
            <person name="Medina N."/>
            <person name="Mellado R.P."/>
            <person name="Mizuno M."/>
            <person name="Moestl D."/>
            <person name="Nakai S."/>
            <person name="Noback M."/>
            <person name="Noone D."/>
            <person name="O'Reilly M."/>
            <person name="Ogawa K."/>
            <person name="Ogiwara A."/>
            <person name="Oudega B."/>
            <person name="Park S.-H."/>
            <person name="Parro V."/>
            <person name="Pohl T.M."/>
            <person name="Portetelle D."/>
            <person name="Porwollik S."/>
            <person name="Prescott A.M."/>
            <person name="Presecan E."/>
            <person name="Pujic P."/>
            <person name="Purnelle B."/>
            <person name="Rapoport G."/>
            <person name="Rey M."/>
            <person name="Reynolds S."/>
            <person name="Rieger M."/>
            <person name="Rivolta C."/>
            <person name="Rocha E."/>
            <person name="Roche B."/>
            <person name="Rose M."/>
            <person name="Sadaie Y."/>
            <person name="Sato T."/>
            <person name="Scanlan E."/>
            <person name="Schleich S."/>
            <person name="Schroeter R."/>
            <person name="Scoffone F."/>
            <person name="Sekiguchi J."/>
            <person name="Sekowska A."/>
            <person name="Seror S.J."/>
            <person name="Serror P."/>
            <person name="Shin B.-S."/>
            <person name="Soldo B."/>
            <person name="Sorokin A."/>
            <person name="Tacconi E."/>
            <person name="Takagi T."/>
            <person name="Takahashi H."/>
            <person name="Takemaru K."/>
            <person name="Takeuchi M."/>
            <person name="Tamakoshi A."/>
            <person name="Tanaka T."/>
            <person name="Terpstra P."/>
            <person name="Tognoni A."/>
            <person name="Tosato V."/>
            <person name="Uchiyama S."/>
            <person name="Vandenbol M."/>
            <person name="Vannier F."/>
            <person name="Vassarotti A."/>
            <person name="Viari A."/>
            <person name="Wambutt R."/>
            <person name="Wedler E."/>
            <person name="Wedler H."/>
            <person name="Weitzenegger T."/>
            <person name="Winters P."/>
            <person name="Wipat A."/>
            <person name="Yamamoto H."/>
            <person name="Yamane K."/>
            <person name="Yasumoto K."/>
            <person name="Yata K."/>
            <person name="Yoshida K."/>
            <person name="Yoshikawa H.-F."/>
            <person name="Zumstein E."/>
            <person name="Yoshikawa H."/>
            <person name="Danchin A."/>
        </authorList>
    </citation>
    <scope>NUCLEOTIDE SEQUENCE [LARGE SCALE GENOMIC DNA]</scope>
    <source>
        <strain>168</strain>
    </source>
</reference>